<sequence>MSTDNKQSLPAITLAAIGVVYGDIGTSPLYTLRECLSGQFGFGVERDAVFGFLSLIFWLLIFVVSIKYLTFVMRADNAGEGGILTLMSLAGRNTSARTTSMLVIMGLIGGSFFYGEVVITPAISVMSAIEGLEIVAPQLDTWIVPLSIIVLTLLFMIQKHGTGMVGKLFAPIMLTWFLILAVLGLRSIIANPEVLHALNPVWAVRFFLEYKTVSFIALGAVVLSITGVEALYADMGHFGKFPIRLAWFTVVLPSLVLNYFGQGALLLKHPEAIKNPFFLLAPDWALIPLLILAALATVIASQAVISGVFSLTRQAVRLGYLSPMRIIHTSEMESGQIYIPFVNWLLYFAVVVVIVSFEHSSNLAAAYGIAVTGTMVLTSILSTTVARKNWHWNKYFVALILIAFLCVDIPLFSANLDKLLSGGWLPLSLGLIMFTIMTTWKSERFRLLRRMHEHGNSLEAMIASLEKSPPVRVPGTAVYMSRALSVIPFALLHNLKHNKVLHERVILLTLRTEDAPYVHNVRRVQIEQLSPTFWRVVASYGWRETPNVEEVFHRCGLEGLSCRMMETSFFMSHESLIVGKRPWYLRLRGKLYLLLQRNALRAPDQFEIPPNRVIELGTQVEI</sequence>
<gene>
    <name evidence="1" type="primary">kup</name>
    <name type="ordered locus">SPAB_04824</name>
</gene>
<protein>
    <recommendedName>
        <fullName evidence="1">Low affinity potassium transport system protein Kup</fullName>
    </recommendedName>
    <alternativeName>
        <fullName evidence="1">Kup system potassium uptake protein</fullName>
    </alternativeName>
</protein>
<proteinExistence type="inferred from homology"/>
<evidence type="ECO:0000255" key="1">
    <source>
        <dbReference type="HAMAP-Rule" id="MF_01522"/>
    </source>
</evidence>
<comment type="function">
    <text evidence="1">Responsible for the low-affinity transport of potassium into the cell. Likely operates as a K(+):H(+) symporter.</text>
</comment>
<comment type="catalytic activity">
    <reaction evidence="1">
        <text>K(+)(in) + H(+)(in) = K(+)(out) + H(+)(out)</text>
        <dbReference type="Rhea" id="RHEA:28490"/>
        <dbReference type="ChEBI" id="CHEBI:15378"/>
        <dbReference type="ChEBI" id="CHEBI:29103"/>
    </reaction>
    <physiologicalReaction direction="right-to-left" evidence="1">
        <dbReference type="Rhea" id="RHEA:28492"/>
    </physiologicalReaction>
</comment>
<comment type="subcellular location">
    <subcellularLocation>
        <location evidence="1">Cell inner membrane</location>
        <topology evidence="1">Multi-pass membrane protein</topology>
    </subcellularLocation>
</comment>
<comment type="similarity">
    <text evidence="1">Belongs to the HAK/KUP transporter (TC 2.A.72) family.</text>
</comment>
<organism>
    <name type="scientific">Salmonella paratyphi B (strain ATCC BAA-1250 / SPB7)</name>
    <dbReference type="NCBI Taxonomy" id="1016998"/>
    <lineage>
        <taxon>Bacteria</taxon>
        <taxon>Pseudomonadati</taxon>
        <taxon>Pseudomonadota</taxon>
        <taxon>Gammaproteobacteria</taxon>
        <taxon>Enterobacterales</taxon>
        <taxon>Enterobacteriaceae</taxon>
        <taxon>Salmonella</taxon>
    </lineage>
</organism>
<feature type="chain" id="PRO_1000087561" description="Low affinity potassium transport system protein Kup">
    <location>
        <begin position="1"/>
        <end position="622"/>
    </location>
</feature>
<feature type="transmembrane region" description="Helical" evidence="1">
    <location>
        <begin position="9"/>
        <end position="29"/>
    </location>
</feature>
<feature type="transmembrane region" description="Helical" evidence="1">
    <location>
        <begin position="49"/>
        <end position="69"/>
    </location>
</feature>
<feature type="transmembrane region" description="Helical" evidence="1">
    <location>
        <begin position="103"/>
        <end position="123"/>
    </location>
</feature>
<feature type="transmembrane region" description="Helical" evidence="1">
    <location>
        <begin position="137"/>
        <end position="157"/>
    </location>
</feature>
<feature type="transmembrane region" description="Helical" evidence="1">
    <location>
        <begin position="165"/>
        <end position="185"/>
    </location>
</feature>
<feature type="transmembrane region" description="Helical" evidence="1">
    <location>
        <begin position="213"/>
        <end position="233"/>
    </location>
</feature>
<feature type="transmembrane region" description="Helical" evidence="1">
    <location>
        <begin position="247"/>
        <end position="267"/>
    </location>
</feature>
<feature type="transmembrane region" description="Helical" evidence="1">
    <location>
        <begin position="276"/>
        <end position="296"/>
    </location>
</feature>
<feature type="transmembrane region" description="Helical" evidence="1">
    <location>
        <begin position="337"/>
        <end position="357"/>
    </location>
</feature>
<feature type="transmembrane region" description="Helical" evidence="1">
    <location>
        <begin position="363"/>
        <end position="383"/>
    </location>
</feature>
<feature type="transmembrane region" description="Helical" evidence="1">
    <location>
        <begin position="396"/>
        <end position="416"/>
    </location>
</feature>
<feature type="transmembrane region" description="Helical" evidence="1">
    <location>
        <begin position="419"/>
        <end position="439"/>
    </location>
</feature>
<keyword id="KW-0997">Cell inner membrane</keyword>
<keyword id="KW-1003">Cell membrane</keyword>
<keyword id="KW-0406">Ion transport</keyword>
<keyword id="KW-0472">Membrane</keyword>
<keyword id="KW-0630">Potassium</keyword>
<keyword id="KW-0633">Potassium transport</keyword>
<keyword id="KW-0769">Symport</keyword>
<keyword id="KW-0812">Transmembrane</keyword>
<keyword id="KW-1133">Transmembrane helix</keyword>
<keyword id="KW-0813">Transport</keyword>
<reference key="1">
    <citation type="submission" date="2007-11" db="EMBL/GenBank/DDBJ databases">
        <authorList>
            <consortium name="The Salmonella enterica serovar Paratyphi B Genome Sequencing Project"/>
            <person name="McClelland M."/>
            <person name="Sanderson E.K."/>
            <person name="Porwollik S."/>
            <person name="Spieth J."/>
            <person name="Clifton W.S."/>
            <person name="Fulton R."/>
            <person name="Cordes M."/>
            <person name="Wollam A."/>
            <person name="Shah N."/>
            <person name="Pepin K."/>
            <person name="Bhonagiri V."/>
            <person name="Nash W."/>
            <person name="Johnson M."/>
            <person name="Thiruvilangam P."/>
            <person name="Wilson R."/>
        </authorList>
    </citation>
    <scope>NUCLEOTIDE SEQUENCE [LARGE SCALE GENOMIC DNA]</scope>
    <source>
        <strain>ATCC BAA-1250 / SPB7</strain>
    </source>
</reference>
<name>KUP_SALPB</name>
<dbReference type="EMBL" id="CP000886">
    <property type="protein sequence ID" value="ABX70135.1"/>
    <property type="molecule type" value="Genomic_DNA"/>
</dbReference>
<dbReference type="RefSeq" id="WP_000102338.1">
    <property type="nucleotide sequence ID" value="NC_010102.1"/>
</dbReference>
<dbReference type="KEGG" id="spq:SPAB_04824"/>
<dbReference type="PATRIC" id="fig|1016998.12.peg.4538"/>
<dbReference type="HOGENOM" id="CLU_008142_4_2_6"/>
<dbReference type="BioCyc" id="SENT1016998:SPAB_RS19590-MONOMER"/>
<dbReference type="Proteomes" id="UP000008556">
    <property type="component" value="Chromosome"/>
</dbReference>
<dbReference type="GO" id="GO:0005886">
    <property type="term" value="C:plasma membrane"/>
    <property type="evidence" value="ECO:0007669"/>
    <property type="project" value="UniProtKB-SubCell"/>
</dbReference>
<dbReference type="GO" id="GO:0015079">
    <property type="term" value="F:potassium ion transmembrane transporter activity"/>
    <property type="evidence" value="ECO:0007669"/>
    <property type="project" value="UniProtKB-UniRule"/>
</dbReference>
<dbReference type="GO" id="GO:0015293">
    <property type="term" value="F:symporter activity"/>
    <property type="evidence" value="ECO:0007669"/>
    <property type="project" value="UniProtKB-UniRule"/>
</dbReference>
<dbReference type="HAMAP" id="MF_01522">
    <property type="entry name" value="Kup"/>
    <property type="match status" value="1"/>
</dbReference>
<dbReference type="InterPro" id="IPR003855">
    <property type="entry name" value="K+_transporter"/>
</dbReference>
<dbReference type="InterPro" id="IPR053952">
    <property type="entry name" value="K_trans_C"/>
</dbReference>
<dbReference type="InterPro" id="IPR053951">
    <property type="entry name" value="K_trans_N"/>
</dbReference>
<dbReference type="InterPro" id="IPR023051">
    <property type="entry name" value="Kup"/>
</dbReference>
<dbReference type="NCBIfam" id="TIGR00794">
    <property type="entry name" value="kup"/>
    <property type="match status" value="1"/>
</dbReference>
<dbReference type="NCBIfam" id="NF008015">
    <property type="entry name" value="PRK10745.1"/>
    <property type="match status" value="1"/>
</dbReference>
<dbReference type="PANTHER" id="PTHR30540:SF79">
    <property type="entry name" value="LOW AFFINITY POTASSIUM TRANSPORT SYSTEM PROTEIN KUP"/>
    <property type="match status" value="1"/>
</dbReference>
<dbReference type="PANTHER" id="PTHR30540">
    <property type="entry name" value="OSMOTIC STRESS POTASSIUM TRANSPORTER"/>
    <property type="match status" value="1"/>
</dbReference>
<dbReference type="Pfam" id="PF02705">
    <property type="entry name" value="K_trans"/>
    <property type="match status" value="1"/>
</dbReference>
<dbReference type="Pfam" id="PF22776">
    <property type="entry name" value="K_trans_C"/>
    <property type="match status" value="1"/>
</dbReference>
<accession>A9MXC4</accession>